<reference key="1">
    <citation type="journal article" date="1999" name="Nature">
        <title>Sequence and analysis of chromosome 2 of the plant Arabidopsis thaliana.</title>
        <authorList>
            <person name="Lin X."/>
            <person name="Kaul S."/>
            <person name="Rounsley S.D."/>
            <person name="Shea T.P."/>
            <person name="Benito M.-I."/>
            <person name="Town C.D."/>
            <person name="Fujii C.Y."/>
            <person name="Mason T.M."/>
            <person name="Bowman C.L."/>
            <person name="Barnstead M.E."/>
            <person name="Feldblyum T.V."/>
            <person name="Buell C.R."/>
            <person name="Ketchum K.A."/>
            <person name="Lee J.J."/>
            <person name="Ronning C.M."/>
            <person name="Koo H.L."/>
            <person name="Moffat K.S."/>
            <person name="Cronin L.A."/>
            <person name="Shen M."/>
            <person name="Pai G."/>
            <person name="Van Aken S."/>
            <person name="Umayam L."/>
            <person name="Tallon L.J."/>
            <person name="Gill J.E."/>
            <person name="Adams M.D."/>
            <person name="Carrera A.J."/>
            <person name="Creasy T.H."/>
            <person name="Goodman H.M."/>
            <person name="Somerville C.R."/>
            <person name="Copenhaver G.P."/>
            <person name="Preuss D."/>
            <person name="Nierman W.C."/>
            <person name="White O."/>
            <person name="Eisen J.A."/>
            <person name="Salzberg S.L."/>
            <person name="Fraser C.M."/>
            <person name="Venter J.C."/>
        </authorList>
    </citation>
    <scope>NUCLEOTIDE SEQUENCE [LARGE SCALE GENOMIC DNA]</scope>
    <source>
        <strain>cv. Columbia</strain>
    </source>
</reference>
<reference key="2">
    <citation type="journal article" date="2017" name="Plant J.">
        <title>Araport11: a complete reannotation of the Arabidopsis thaliana reference genome.</title>
        <authorList>
            <person name="Cheng C.Y."/>
            <person name="Krishnakumar V."/>
            <person name="Chan A.P."/>
            <person name="Thibaud-Nissen F."/>
            <person name="Schobel S."/>
            <person name="Town C.D."/>
        </authorList>
    </citation>
    <scope>GENOME REANNOTATION</scope>
    <source>
        <strain>cv. Columbia</strain>
    </source>
</reference>
<reference key="3">
    <citation type="submission" date="2006-03" db="EMBL/GenBank/DDBJ databases">
        <title>Arabidopsis ORF clones.</title>
        <authorList>
            <person name="Kim C.J."/>
            <person name="Chen H."/>
            <person name="Shinn P."/>
            <person name="Ecker J.R."/>
        </authorList>
    </citation>
    <scope>NUCLEOTIDE SEQUENCE [LARGE SCALE MRNA]</scope>
    <source>
        <strain>cv. Columbia</strain>
    </source>
</reference>
<reference key="4">
    <citation type="submission" date="2006-07" db="EMBL/GenBank/DDBJ databases">
        <title>Large-scale analysis of RIKEN Arabidopsis full-length (RAFL) cDNAs.</title>
        <authorList>
            <person name="Totoki Y."/>
            <person name="Seki M."/>
            <person name="Ishida J."/>
            <person name="Nakajima M."/>
            <person name="Enju A."/>
            <person name="Kamiya A."/>
            <person name="Narusaka M."/>
            <person name="Shin-i T."/>
            <person name="Nakagawa M."/>
            <person name="Sakamoto N."/>
            <person name="Oishi K."/>
            <person name="Kohara Y."/>
            <person name="Kobayashi M."/>
            <person name="Toyoda A."/>
            <person name="Sakaki Y."/>
            <person name="Sakurai T."/>
            <person name="Iida K."/>
            <person name="Akiyama K."/>
            <person name="Satou M."/>
            <person name="Toyoda T."/>
            <person name="Konagaya A."/>
            <person name="Carninci P."/>
            <person name="Kawai J."/>
            <person name="Hayashizaki Y."/>
            <person name="Shinozaki K."/>
        </authorList>
    </citation>
    <scope>NUCLEOTIDE SEQUENCE [LARGE SCALE MRNA]</scope>
    <source>
        <strain>cv. Columbia</strain>
    </source>
</reference>
<reference key="5">
    <citation type="submission" date="2002-03" db="EMBL/GenBank/DDBJ databases">
        <title>Full-length cDNA from Arabidopsis thaliana.</title>
        <authorList>
            <person name="Brover V.V."/>
            <person name="Troukhan M.E."/>
            <person name="Alexandrov N.A."/>
            <person name="Lu Y.-P."/>
            <person name="Flavell R.B."/>
            <person name="Feldmann K.A."/>
        </authorList>
    </citation>
    <scope>NUCLEOTIDE SEQUENCE [LARGE SCALE MRNA]</scope>
</reference>
<reference key="6">
    <citation type="journal article" date="2007" name="Physiol. Plantarum">
        <title>Arabidopsis prolyl 4-hydroxylases are differentially expressed in response to hypoxia, anoxia and mechanical wounding.</title>
        <authorList>
            <person name="Vlad F."/>
            <person name="Spano T."/>
            <person name="Vlad D."/>
            <person name="Bou Daher F."/>
            <person name="Ouelhadj A."/>
            <person name="Kalaitzis P."/>
        </authorList>
    </citation>
    <scope>GENE FAMILY</scope>
    <scope>NOMENCLATURE</scope>
</reference>
<reference key="7">
    <citation type="journal article" date="2011" name="Science">
        <title>O-glycosylated cell wall proteins are essential in root hair growth.</title>
        <authorList>
            <person name="Velasquez S.M."/>
            <person name="Ricardi M.M."/>
            <person name="Dorosz J.G."/>
            <person name="Fernandez P.V."/>
            <person name="Nadra A.D."/>
            <person name="Pol-Fachin L."/>
            <person name="Egelund J."/>
            <person name="Gille S."/>
            <person name="Harholt J."/>
            <person name="Ciancia M."/>
            <person name="Verli H."/>
            <person name="Pauly M."/>
            <person name="Bacic A."/>
            <person name="Olsen C.E."/>
            <person name="Ulvskov P."/>
            <person name="Petersen B.L."/>
            <person name="Somerville C."/>
            <person name="Iusem N.D."/>
            <person name="Estevez J.M."/>
        </authorList>
    </citation>
    <scope>FUNCTION</scope>
    <scope>SUBCELLULAR LOCATION</scope>
    <scope>TISSUE SPECIFICITY</scope>
    <scope>DISRUPTION PHENOTYPE</scope>
</reference>
<organism>
    <name type="scientific">Arabidopsis thaliana</name>
    <name type="common">Mouse-ear cress</name>
    <dbReference type="NCBI Taxonomy" id="3702"/>
    <lineage>
        <taxon>Eukaryota</taxon>
        <taxon>Viridiplantae</taxon>
        <taxon>Streptophyta</taxon>
        <taxon>Embryophyta</taxon>
        <taxon>Tracheophyta</taxon>
        <taxon>Spermatophyta</taxon>
        <taxon>Magnoliopsida</taxon>
        <taxon>eudicotyledons</taxon>
        <taxon>Gunneridae</taxon>
        <taxon>Pentapetalae</taxon>
        <taxon>rosids</taxon>
        <taxon>malvids</taxon>
        <taxon>Brassicales</taxon>
        <taxon>Brassicaceae</taxon>
        <taxon>Camelineae</taxon>
        <taxon>Arabidopsis</taxon>
    </lineage>
</organism>
<keyword id="KW-0223">Dioxygenase</keyword>
<keyword id="KW-0256">Endoplasmic reticulum</keyword>
<keyword id="KW-0325">Glycoprotein</keyword>
<keyword id="KW-0333">Golgi apparatus</keyword>
<keyword id="KW-0408">Iron</keyword>
<keyword id="KW-0472">Membrane</keyword>
<keyword id="KW-0479">Metal-binding</keyword>
<keyword id="KW-0560">Oxidoreductase</keyword>
<keyword id="KW-1185">Reference proteome</keyword>
<keyword id="KW-0735">Signal-anchor</keyword>
<keyword id="KW-0812">Transmembrane</keyword>
<keyword id="KW-1133">Transmembrane helix</keyword>
<gene>
    <name evidence="7" type="primary">P4H5</name>
    <name type="ordered locus">At2g17720</name>
    <name type="ORF">T17A5.10</name>
</gene>
<dbReference type="EC" id="1.14.11.2" evidence="8"/>
<dbReference type="EMBL" id="CP002685">
    <property type="protein sequence ID" value="AEC06673.1"/>
    <property type="molecule type" value="Genomic_DNA"/>
</dbReference>
<dbReference type="EMBL" id="BT024854">
    <property type="protein sequence ID" value="ABD65585.1"/>
    <property type="molecule type" value="mRNA"/>
</dbReference>
<dbReference type="EMBL" id="AK229496">
    <property type="protein sequence ID" value="BAF01353.1"/>
    <property type="molecule type" value="mRNA"/>
</dbReference>
<dbReference type="EMBL" id="AY087497">
    <property type="protein sequence ID" value="AAM65040.1"/>
    <property type="molecule type" value="mRNA"/>
</dbReference>
<dbReference type="PIR" id="T08863">
    <property type="entry name" value="T08863"/>
</dbReference>
<dbReference type="RefSeq" id="NP_179363.1">
    <property type="nucleotide sequence ID" value="NM_127326.5"/>
</dbReference>
<dbReference type="SMR" id="Q24JN5"/>
<dbReference type="FunCoup" id="Q24JN5">
    <property type="interactions" value="223"/>
</dbReference>
<dbReference type="STRING" id="3702.Q24JN5"/>
<dbReference type="GlyCosmos" id="Q24JN5">
    <property type="glycosylation" value="2 sites, No reported glycans"/>
</dbReference>
<dbReference type="GlyGen" id="Q24JN5">
    <property type="glycosylation" value="2 sites"/>
</dbReference>
<dbReference type="PaxDb" id="3702-AT2G17720.1"/>
<dbReference type="ProteomicsDB" id="248729"/>
<dbReference type="EnsemblPlants" id="AT2G17720.1">
    <property type="protein sequence ID" value="AT2G17720.1"/>
    <property type="gene ID" value="AT2G17720"/>
</dbReference>
<dbReference type="GeneID" id="816281"/>
<dbReference type="Gramene" id="AT2G17720.1">
    <property type="protein sequence ID" value="AT2G17720.1"/>
    <property type="gene ID" value="AT2G17720"/>
</dbReference>
<dbReference type="KEGG" id="ath:AT2G17720"/>
<dbReference type="Araport" id="AT2G17720"/>
<dbReference type="TAIR" id="AT2G17720">
    <property type="gene designation" value="P4H5"/>
</dbReference>
<dbReference type="eggNOG" id="KOG1591">
    <property type="taxonomic scope" value="Eukaryota"/>
</dbReference>
<dbReference type="HOGENOM" id="CLU_058132_1_2_1"/>
<dbReference type="InParanoid" id="Q24JN5"/>
<dbReference type="OMA" id="WTHVPES"/>
<dbReference type="OrthoDB" id="420380at2759"/>
<dbReference type="PhylomeDB" id="Q24JN5"/>
<dbReference type="BioCyc" id="ARA:AT2G17720-MONOMER"/>
<dbReference type="PRO" id="PR:Q24JN5"/>
<dbReference type="Proteomes" id="UP000006548">
    <property type="component" value="Chromosome 2"/>
</dbReference>
<dbReference type="ExpressionAtlas" id="Q24JN5">
    <property type="expression patterns" value="baseline and differential"/>
</dbReference>
<dbReference type="GO" id="GO:0005783">
    <property type="term" value="C:endoplasmic reticulum"/>
    <property type="evidence" value="ECO:0007005"/>
    <property type="project" value="TAIR"/>
</dbReference>
<dbReference type="GO" id="GO:0005789">
    <property type="term" value="C:endoplasmic reticulum membrane"/>
    <property type="evidence" value="ECO:0007669"/>
    <property type="project" value="UniProtKB-SubCell"/>
</dbReference>
<dbReference type="GO" id="GO:0000137">
    <property type="term" value="C:Golgi cis cisterna"/>
    <property type="evidence" value="ECO:0007005"/>
    <property type="project" value="TAIR"/>
</dbReference>
<dbReference type="GO" id="GO:0000139">
    <property type="term" value="C:Golgi membrane"/>
    <property type="evidence" value="ECO:0007669"/>
    <property type="project" value="UniProtKB-SubCell"/>
</dbReference>
<dbReference type="GO" id="GO:0005739">
    <property type="term" value="C:mitochondrion"/>
    <property type="evidence" value="ECO:0007005"/>
    <property type="project" value="TAIR"/>
</dbReference>
<dbReference type="GO" id="GO:0005506">
    <property type="term" value="F:iron ion binding"/>
    <property type="evidence" value="ECO:0007669"/>
    <property type="project" value="InterPro"/>
</dbReference>
<dbReference type="GO" id="GO:0031418">
    <property type="term" value="F:L-ascorbic acid binding"/>
    <property type="evidence" value="ECO:0007669"/>
    <property type="project" value="InterPro"/>
</dbReference>
<dbReference type="GO" id="GO:0004656">
    <property type="term" value="F:procollagen-proline 4-dioxygenase activity"/>
    <property type="evidence" value="ECO:0007669"/>
    <property type="project" value="UniProtKB-EC"/>
</dbReference>
<dbReference type="GO" id="GO:0080147">
    <property type="term" value="P:root hair cell development"/>
    <property type="evidence" value="ECO:0000315"/>
    <property type="project" value="TAIR"/>
</dbReference>
<dbReference type="FunFam" id="2.60.120.620:FF:000002">
    <property type="entry name" value="Prolyl 4-hydroxylase 4"/>
    <property type="match status" value="1"/>
</dbReference>
<dbReference type="Gene3D" id="2.60.120.620">
    <property type="entry name" value="q2cbj1_9rhob like domain"/>
    <property type="match status" value="1"/>
</dbReference>
<dbReference type="InterPro" id="IPR005123">
    <property type="entry name" value="Oxoglu/Fe-dep_dioxygenase_dom"/>
</dbReference>
<dbReference type="InterPro" id="IPR045054">
    <property type="entry name" value="P4HA-like"/>
</dbReference>
<dbReference type="InterPro" id="IPR006620">
    <property type="entry name" value="Pro_4_hyd_alph"/>
</dbReference>
<dbReference type="InterPro" id="IPR044862">
    <property type="entry name" value="Pro_4_hyd_alph_FE2OG_OXY"/>
</dbReference>
<dbReference type="PANTHER" id="PTHR10869:SF193">
    <property type="entry name" value="PROLYL 4-HYDROXYLASE 5"/>
    <property type="match status" value="1"/>
</dbReference>
<dbReference type="PANTHER" id="PTHR10869">
    <property type="entry name" value="PROLYL 4-HYDROXYLASE ALPHA SUBUNIT"/>
    <property type="match status" value="1"/>
</dbReference>
<dbReference type="Pfam" id="PF13640">
    <property type="entry name" value="2OG-FeII_Oxy_3"/>
    <property type="match status" value="1"/>
</dbReference>
<dbReference type="SMART" id="SM00702">
    <property type="entry name" value="P4Hc"/>
    <property type="match status" value="1"/>
</dbReference>
<dbReference type="PROSITE" id="PS51471">
    <property type="entry name" value="FE2OG_OXY"/>
    <property type="match status" value="1"/>
</dbReference>
<feature type="chain" id="PRO_0000429339" description="Prolyl 4-hydroxylase 5">
    <location>
        <begin position="1"/>
        <end position="291"/>
    </location>
</feature>
<feature type="topological domain" description="Cytoplasmic" evidence="8">
    <location>
        <begin position="1"/>
        <end position="22"/>
    </location>
</feature>
<feature type="transmembrane region" description="Helical; Signal-anchor for type II membrane protein" evidence="3">
    <location>
        <begin position="23"/>
        <end position="43"/>
    </location>
</feature>
<feature type="topological domain" description="Extracellular" evidence="8">
    <location>
        <begin position="44"/>
        <end position="291"/>
    </location>
</feature>
<feature type="domain" description="Fe2OG dioxygenase" evidence="5">
    <location>
        <begin position="163"/>
        <end position="286"/>
    </location>
</feature>
<feature type="binding site" evidence="5">
    <location>
        <position position="181"/>
    </location>
    <ligand>
        <name>Fe cation</name>
        <dbReference type="ChEBI" id="CHEBI:24875"/>
    </ligand>
</feature>
<feature type="binding site" evidence="5">
    <location>
        <position position="183"/>
    </location>
    <ligand>
        <name>Fe cation</name>
        <dbReference type="ChEBI" id="CHEBI:24875"/>
    </ligand>
</feature>
<feature type="binding site" evidence="5">
    <location>
        <position position="267"/>
    </location>
    <ligand>
        <name>Fe cation</name>
        <dbReference type="ChEBI" id="CHEBI:24875"/>
    </ligand>
</feature>
<feature type="binding site" evidence="5">
    <location>
        <position position="277"/>
    </location>
    <ligand>
        <name>2-oxoglutarate</name>
        <dbReference type="ChEBI" id="CHEBI:16810"/>
    </ligand>
</feature>
<feature type="glycosylation site" description="N-linked (GlcNAc...) asparagine" evidence="4">
    <location>
        <position position="51"/>
    </location>
</feature>
<feature type="glycosylation site" description="N-linked (GlcNAc...) asparagine" evidence="4">
    <location>
        <position position="222"/>
    </location>
</feature>
<evidence type="ECO:0000250" key="1">
    <source>
        <dbReference type="UniProtKB" id="Q86KR9"/>
    </source>
</evidence>
<evidence type="ECO:0000250" key="2">
    <source>
        <dbReference type="UniProtKB" id="Q9ZW86"/>
    </source>
</evidence>
<evidence type="ECO:0000255" key="3"/>
<evidence type="ECO:0000255" key="4">
    <source>
        <dbReference type="PROSITE-ProRule" id="PRU00498"/>
    </source>
</evidence>
<evidence type="ECO:0000255" key="5">
    <source>
        <dbReference type="PROSITE-ProRule" id="PRU00805"/>
    </source>
</evidence>
<evidence type="ECO:0000269" key="6">
    <source>
    </source>
</evidence>
<evidence type="ECO:0000303" key="7">
    <source>
    </source>
</evidence>
<evidence type="ECO:0000305" key="8"/>
<evidence type="ECO:0000305" key="9">
    <source>
    </source>
</evidence>
<name>P4H5_ARATH</name>
<accession>Q24JN5</accession>
<accession>Q8LB05</accession>
<comment type="function">
    <text evidence="6">Catalyzes the post-translational formation of 4-hydroxyproline in -Xaa-Pro-Gly- sequences in proline-rich peptide sequences of plant glycoproteins and other proteins. Hydroxyprolines are important constituent of many plant cell wall glycoproteins such as extensins, hydroxyproline-rich glycoproteins, lectins and arabinogalactan proteins. Possesses high affinity for leucine-rich repeat and proline-rich extensins of root cell walls that are essential for root hair development. Hydroxyprolines define the subsequent O-glycosylation sites by arabinosyltransferases which elongate the O-arabinosides on extensins.</text>
</comment>
<comment type="catalytic activity">
    <reaction evidence="2">
        <text>L-prolyl-[collagen] + 2-oxoglutarate + O2 = trans-4-hydroxy-L-prolyl-[collagen] + succinate + CO2</text>
        <dbReference type="Rhea" id="RHEA:18945"/>
        <dbReference type="Rhea" id="RHEA-COMP:11676"/>
        <dbReference type="Rhea" id="RHEA-COMP:11680"/>
        <dbReference type="ChEBI" id="CHEBI:15379"/>
        <dbReference type="ChEBI" id="CHEBI:16526"/>
        <dbReference type="ChEBI" id="CHEBI:16810"/>
        <dbReference type="ChEBI" id="CHEBI:30031"/>
        <dbReference type="ChEBI" id="CHEBI:50342"/>
        <dbReference type="ChEBI" id="CHEBI:61965"/>
        <dbReference type="EC" id="1.14.11.2"/>
    </reaction>
</comment>
<comment type="cofactor">
    <cofactor evidence="5">
        <name>Fe(2+)</name>
        <dbReference type="ChEBI" id="CHEBI:29033"/>
    </cofactor>
    <text evidence="5">Binds 1 Fe(2+) ion per subunit.</text>
</comment>
<comment type="cofactor">
    <cofactor evidence="1">
        <name>L-ascorbate</name>
        <dbReference type="ChEBI" id="CHEBI:38290"/>
    </cofactor>
</comment>
<comment type="subcellular location">
    <subcellularLocation>
        <location evidence="9">Endoplasmic reticulum membrane</location>
        <topology evidence="9">Single-pass type II membrane protein</topology>
    </subcellularLocation>
    <subcellularLocation>
        <location evidence="9">Golgi apparatus membrane</location>
        <topology evidence="9">Single-pass type II membrane protein</topology>
    </subcellularLocation>
    <text evidence="6">Predominantly localized in the endoplasmic reticulum.</text>
</comment>
<comment type="tissue specificity">
    <text evidence="6">Expressed in epidermal root hair cells (trichoblasts).</text>
</comment>
<comment type="disruption phenotype">
    <text evidence="6">Reduced root hair length and content of hydroxyproline in root cell walls.</text>
</comment>
<comment type="similarity">
    <text evidence="8">Belongs to the P4HA family.</text>
</comment>
<sequence length="291" mass="32691">MASKSKQHLRYQPRKSVSRSTQAFTVLILLLVVILILLGLGILSLPNANRNSSKTNDLTNIVRKSETSSGDEEGNGERWVEVISWEPRAVVYHNFLTNEECEHLISLAKPSMVKSTVVDEKTGGSKDSRVRTSSGTFLRRGHDEVVEVIEKRISDFTFIPVENGEGLQVLHYQVGQKYEPHYDYFLDEFNTKNGGQRIATVLMYLSDVDDGGETVFPAARGNISAVPWWNELSKCGKEGLSVLPKKRDALLFWNMRPDASLDPSSLHGGCPVVKGNKWSSTKWFHVHEFKV</sequence>
<proteinExistence type="evidence at transcript level"/>
<protein>
    <recommendedName>
        <fullName evidence="8">Prolyl 4-hydroxylase 5</fullName>
        <shortName evidence="7">AtP4H5</shortName>
        <ecNumber evidence="8">1.14.11.2</ecNumber>
    </recommendedName>
</protein>